<gene>
    <name type="primary">Becn1</name>
</gene>
<reference key="1">
    <citation type="journal article" date="1999" name="Nature">
        <title>Induction of autophagy and inhibition of tumorigenesis by beclin 1.</title>
        <authorList>
            <person name="Liang X.H."/>
            <person name="Jackson S."/>
            <person name="Seaman M."/>
            <person name="Brown K."/>
            <person name="Kempkes B."/>
            <person name="Hibshoosh H."/>
            <person name="Levine B."/>
        </authorList>
    </citation>
    <scope>NUCLEOTIDE SEQUENCE [MRNA]</scope>
    <scope>FUNCTION</scope>
    <source>
        <tissue>Brain</tissue>
    </source>
</reference>
<reference key="2">
    <citation type="journal article" date="1998" name="J. Virol.">
        <title>Protection against fatal Sindbis virus encephalitis by beclin, a novel Bcl-2-interacting protein.</title>
        <authorList>
            <person name="Liang X.H."/>
            <person name="Kleeman L.K."/>
            <person name="Jiang H.H."/>
            <person name="Gordon G."/>
            <person name="Goldman J.E."/>
            <person name="Berry G."/>
            <person name="Herman B."/>
            <person name="Levine B."/>
        </authorList>
    </citation>
    <scope>NUCLEOTIDE SEQUENCE [MRNA]</scope>
    <source>
        <tissue>Brain</tissue>
    </source>
</reference>
<reference key="3">
    <citation type="journal article" date="2005" name="Science">
        <title>The transcriptional landscape of the mammalian genome.</title>
        <authorList>
            <person name="Carninci P."/>
            <person name="Kasukawa T."/>
            <person name="Katayama S."/>
            <person name="Gough J."/>
            <person name="Frith M.C."/>
            <person name="Maeda N."/>
            <person name="Oyama R."/>
            <person name="Ravasi T."/>
            <person name="Lenhard B."/>
            <person name="Wells C."/>
            <person name="Kodzius R."/>
            <person name="Shimokawa K."/>
            <person name="Bajic V.B."/>
            <person name="Brenner S.E."/>
            <person name="Batalov S."/>
            <person name="Forrest A.R."/>
            <person name="Zavolan M."/>
            <person name="Davis M.J."/>
            <person name="Wilming L.G."/>
            <person name="Aidinis V."/>
            <person name="Allen J.E."/>
            <person name="Ambesi-Impiombato A."/>
            <person name="Apweiler R."/>
            <person name="Aturaliya R.N."/>
            <person name="Bailey T.L."/>
            <person name="Bansal M."/>
            <person name="Baxter L."/>
            <person name="Beisel K.W."/>
            <person name="Bersano T."/>
            <person name="Bono H."/>
            <person name="Chalk A.M."/>
            <person name="Chiu K.P."/>
            <person name="Choudhary V."/>
            <person name="Christoffels A."/>
            <person name="Clutterbuck D.R."/>
            <person name="Crowe M.L."/>
            <person name="Dalla E."/>
            <person name="Dalrymple B.P."/>
            <person name="de Bono B."/>
            <person name="Della Gatta G."/>
            <person name="di Bernardo D."/>
            <person name="Down T."/>
            <person name="Engstrom P."/>
            <person name="Fagiolini M."/>
            <person name="Faulkner G."/>
            <person name="Fletcher C.F."/>
            <person name="Fukushima T."/>
            <person name="Furuno M."/>
            <person name="Futaki S."/>
            <person name="Gariboldi M."/>
            <person name="Georgii-Hemming P."/>
            <person name="Gingeras T.R."/>
            <person name="Gojobori T."/>
            <person name="Green R.E."/>
            <person name="Gustincich S."/>
            <person name="Harbers M."/>
            <person name="Hayashi Y."/>
            <person name="Hensch T.K."/>
            <person name="Hirokawa N."/>
            <person name="Hill D."/>
            <person name="Huminiecki L."/>
            <person name="Iacono M."/>
            <person name="Ikeo K."/>
            <person name="Iwama A."/>
            <person name="Ishikawa T."/>
            <person name="Jakt M."/>
            <person name="Kanapin A."/>
            <person name="Katoh M."/>
            <person name="Kawasawa Y."/>
            <person name="Kelso J."/>
            <person name="Kitamura H."/>
            <person name="Kitano H."/>
            <person name="Kollias G."/>
            <person name="Krishnan S.P."/>
            <person name="Kruger A."/>
            <person name="Kummerfeld S.K."/>
            <person name="Kurochkin I.V."/>
            <person name="Lareau L.F."/>
            <person name="Lazarevic D."/>
            <person name="Lipovich L."/>
            <person name="Liu J."/>
            <person name="Liuni S."/>
            <person name="McWilliam S."/>
            <person name="Madan Babu M."/>
            <person name="Madera M."/>
            <person name="Marchionni L."/>
            <person name="Matsuda H."/>
            <person name="Matsuzawa S."/>
            <person name="Miki H."/>
            <person name="Mignone F."/>
            <person name="Miyake S."/>
            <person name="Morris K."/>
            <person name="Mottagui-Tabar S."/>
            <person name="Mulder N."/>
            <person name="Nakano N."/>
            <person name="Nakauchi H."/>
            <person name="Ng P."/>
            <person name="Nilsson R."/>
            <person name="Nishiguchi S."/>
            <person name="Nishikawa S."/>
            <person name="Nori F."/>
            <person name="Ohara O."/>
            <person name="Okazaki Y."/>
            <person name="Orlando V."/>
            <person name="Pang K.C."/>
            <person name="Pavan W.J."/>
            <person name="Pavesi G."/>
            <person name="Pesole G."/>
            <person name="Petrovsky N."/>
            <person name="Piazza S."/>
            <person name="Reed J."/>
            <person name="Reid J.F."/>
            <person name="Ring B.Z."/>
            <person name="Ringwald M."/>
            <person name="Rost B."/>
            <person name="Ruan Y."/>
            <person name="Salzberg S.L."/>
            <person name="Sandelin A."/>
            <person name="Schneider C."/>
            <person name="Schoenbach C."/>
            <person name="Sekiguchi K."/>
            <person name="Semple C.A."/>
            <person name="Seno S."/>
            <person name="Sessa L."/>
            <person name="Sheng Y."/>
            <person name="Shibata Y."/>
            <person name="Shimada H."/>
            <person name="Shimada K."/>
            <person name="Silva D."/>
            <person name="Sinclair B."/>
            <person name="Sperling S."/>
            <person name="Stupka E."/>
            <person name="Sugiura K."/>
            <person name="Sultana R."/>
            <person name="Takenaka Y."/>
            <person name="Taki K."/>
            <person name="Tammoja K."/>
            <person name="Tan S.L."/>
            <person name="Tang S."/>
            <person name="Taylor M.S."/>
            <person name="Tegner J."/>
            <person name="Teichmann S.A."/>
            <person name="Ueda H.R."/>
            <person name="van Nimwegen E."/>
            <person name="Verardo R."/>
            <person name="Wei C.L."/>
            <person name="Yagi K."/>
            <person name="Yamanishi H."/>
            <person name="Zabarovsky E."/>
            <person name="Zhu S."/>
            <person name="Zimmer A."/>
            <person name="Hide W."/>
            <person name="Bult C."/>
            <person name="Grimmond S.M."/>
            <person name="Teasdale R.D."/>
            <person name="Liu E.T."/>
            <person name="Brusic V."/>
            <person name="Quackenbush J."/>
            <person name="Wahlestedt C."/>
            <person name="Mattick J.S."/>
            <person name="Hume D.A."/>
            <person name="Kai C."/>
            <person name="Sasaki D."/>
            <person name="Tomaru Y."/>
            <person name="Fukuda S."/>
            <person name="Kanamori-Katayama M."/>
            <person name="Suzuki M."/>
            <person name="Aoki J."/>
            <person name="Arakawa T."/>
            <person name="Iida J."/>
            <person name="Imamura K."/>
            <person name="Itoh M."/>
            <person name="Kato T."/>
            <person name="Kawaji H."/>
            <person name="Kawagashira N."/>
            <person name="Kawashima T."/>
            <person name="Kojima M."/>
            <person name="Kondo S."/>
            <person name="Konno H."/>
            <person name="Nakano K."/>
            <person name="Ninomiya N."/>
            <person name="Nishio T."/>
            <person name="Okada M."/>
            <person name="Plessy C."/>
            <person name="Shibata K."/>
            <person name="Shiraki T."/>
            <person name="Suzuki S."/>
            <person name="Tagami M."/>
            <person name="Waki K."/>
            <person name="Watahiki A."/>
            <person name="Okamura-Oho Y."/>
            <person name="Suzuki H."/>
            <person name="Kawai J."/>
            <person name="Hayashizaki Y."/>
        </authorList>
    </citation>
    <scope>NUCLEOTIDE SEQUENCE [LARGE SCALE MRNA]</scope>
    <source>
        <strain>C57BL/6J</strain>
        <tissue>Liver</tissue>
        <tissue>Olfactory bulb</tissue>
        <tissue>Spinal ganglion</tissue>
    </source>
</reference>
<reference key="4">
    <citation type="journal article" date="2009" name="PLoS Biol.">
        <title>Lineage-specific biology revealed by a finished genome assembly of the mouse.</title>
        <authorList>
            <person name="Church D.M."/>
            <person name="Goodstadt L."/>
            <person name="Hillier L.W."/>
            <person name="Zody M.C."/>
            <person name="Goldstein S."/>
            <person name="She X."/>
            <person name="Bult C.J."/>
            <person name="Agarwala R."/>
            <person name="Cherry J.L."/>
            <person name="DiCuccio M."/>
            <person name="Hlavina W."/>
            <person name="Kapustin Y."/>
            <person name="Meric P."/>
            <person name="Maglott D."/>
            <person name="Birtle Z."/>
            <person name="Marques A.C."/>
            <person name="Graves T."/>
            <person name="Zhou S."/>
            <person name="Teague B."/>
            <person name="Potamousis K."/>
            <person name="Churas C."/>
            <person name="Place M."/>
            <person name="Herschleb J."/>
            <person name="Runnheim R."/>
            <person name="Forrest D."/>
            <person name="Amos-Landgraf J."/>
            <person name="Schwartz D.C."/>
            <person name="Cheng Z."/>
            <person name="Lindblad-Toh K."/>
            <person name="Eichler E.E."/>
            <person name="Ponting C.P."/>
        </authorList>
    </citation>
    <scope>NUCLEOTIDE SEQUENCE [LARGE SCALE GENOMIC DNA]</scope>
    <source>
        <strain>C57BL/6J</strain>
    </source>
</reference>
<reference key="5">
    <citation type="journal article" date="2004" name="Genome Res.">
        <title>The status, quality, and expansion of the NIH full-length cDNA project: the Mammalian Gene Collection (MGC).</title>
        <authorList>
            <consortium name="The MGC Project Team"/>
        </authorList>
    </citation>
    <scope>NUCLEOTIDE SEQUENCE [LARGE SCALE MRNA]</scope>
    <source>
        <strain>129</strain>
        <tissue>Mammary tumor</tissue>
    </source>
</reference>
<reference key="6">
    <citation type="journal article" date="2002" name="Neuron">
        <title>A novel protein complex linking the delta 2 glutamate receptor and autophagy: implications for neurodegeneration in lurcher mice.</title>
        <authorList>
            <person name="Yue Z."/>
            <person name="Horton A."/>
            <person name="Bravin M."/>
            <person name="DeJager P.L."/>
            <person name="Selimi F."/>
            <person name="Heintz N."/>
        </authorList>
    </citation>
    <scope>SUBCELLULAR LOCATION</scope>
    <scope>INTERACTION WITH GOPC AND GRID2</scope>
    <scope>FUNCTION</scope>
</reference>
<reference key="7">
    <citation type="journal article" date="2003" name="Proc. Natl. Acad. Sci. U.S.A.">
        <title>Beclin 1, an autophagy gene essential for early embryonic development, is a haploinsufficient tumor suppressor.</title>
        <authorList>
            <person name="Yue Z."/>
            <person name="Jin S."/>
            <person name="Yang C."/>
            <person name="Levine A.J."/>
            <person name="Heintz N."/>
        </authorList>
    </citation>
    <scope>DISRUPTION PHENOTYPE</scope>
</reference>
<reference key="8">
    <citation type="journal article" date="2007" name="Nature">
        <title>Ambra1 regulates autophagy and development of the nervous system.</title>
        <authorList>
            <person name="Maria Fimia G."/>
            <person name="Stoykova A."/>
            <person name="Romagnoli A."/>
            <person name="Giunta L."/>
            <person name="Di Bartolomeo S."/>
            <person name="Nardacci R."/>
            <person name="Corazzari M."/>
            <person name="Fuoco C."/>
            <person name="Ucar A."/>
            <person name="Schwartz P."/>
            <person name="Gruss P."/>
            <person name="Piacentini M."/>
            <person name="Chowdhury K."/>
            <person name="Cecconi F."/>
        </authorList>
    </citation>
    <scope>INTERACTION WITH AMBRA1 AND PIK3C3</scope>
</reference>
<reference key="9">
    <citation type="journal article" date="2009" name="Nat. Cell Biol.">
        <title>Distinct regulation of autophagic activity by Atg14L and Rubicon associated with Beclin 1-phosphatidylinositol-3-kinase complex.</title>
        <authorList>
            <person name="Zhong Y."/>
            <person name="Wang Q.J."/>
            <person name="Li X."/>
            <person name="Yan Y."/>
            <person name="Backer J.M."/>
            <person name="Chait B.T."/>
            <person name="Heintz N."/>
            <person name="Yue Z."/>
        </authorList>
    </citation>
    <scope>FUNCTION</scope>
    <scope>INTERACTION WITH ATG14; RUBCN; PIK3C3; PIK3R4 AND UVRAG</scope>
</reference>
<reference key="10">
    <citation type="journal article" date="2010" name="Cell">
        <title>A tissue-specific atlas of mouse protein phosphorylation and expression.</title>
        <authorList>
            <person name="Huttlin E.L."/>
            <person name="Jedrychowski M.P."/>
            <person name="Elias J.E."/>
            <person name="Goswami T."/>
            <person name="Rad R."/>
            <person name="Beausoleil S.A."/>
            <person name="Villen J."/>
            <person name="Haas W."/>
            <person name="Sowa M.E."/>
            <person name="Gygi S.P."/>
        </authorList>
    </citation>
    <scope>IDENTIFICATION BY MASS SPECTROMETRY [LARGE SCALE ANALYSIS]</scope>
    <source>
        <tissue>Brain</tissue>
        <tissue>Lung</tissue>
        <tissue>Spleen</tissue>
        <tissue>Testis</tissue>
    </source>
</reference>
<reference key="11">
    <citation type="journal article" date="2010" name="Cell Death Dis.">
        <title>Caspase-mediated cleavage of Beclin-1 inactivates Beclin-1-induced autophagy and enhances apoptosis by promoting the release of proapoptotic factors from mitochondria.</title>
        <authorList>
            <person name="Wirawan E."/>
            <person name="Vande Walle L."/>
            <person name="Kersse K."/>
            <person name="Cornelis S."/>
            <person name="Claerhout S."/>
            <person name="Vanoverberghe I."/>
            <person name="Roelandt R."/>
            <person name="De Rycke R."/>
            <person name="Verspurten J."/>
            <person name="Declercq W."/>
            <person name="Agostinis P."/>
            <person name="Vanden Berghe T."/>
            <person name="Lippens S."/>
            <person name="Vandenabeele P."/>
        </authorList>
    </citation>
    <scope>PROTEOLYTIC CLEAVAGE</scope>
    <scope>SUBCELLULAR LOCATION</scope>
</reference>
<reference key="12">
    <citation type="journal article" date="2010" name="J. Cell Biol.">
        <title>Endogenous HMGB1 regulates autophagy.</title>
        <authorList>
            <person name="Tang D."/>
            <person name="Kang R."/>
            <person name="Livesey K.M."/>
            <person name="Cheh C.W."/>
            <person name="Farkas A."/>
            <person name="Loughran P."/>
            <person name="Hoppe G."/>
            <person name="Bianchi M.E."/>
            <person name="Tracey K.J."/>
            <person name="Zeh H.J. III"/>
            <person name="Lotze M.T."/>
        </authorList>
    </citation>
    <scope>INTERACTION WITH HMGB1</scope>
</reference>
<reference key="13">
    <citation type="journal article" date="2010" name="J. Cell Biol.">
        <title>The class IA phosphatidylinositol 3-kinase p110-beta subunit is a positive regulator of autophagy.</title>
        <authorList>
            <person name="Dou Z."/>
            <person name="Chattopadhyay M."/>
            <person name="Pan J.-A."/>
            <person name="Guerriero J.L."/>
            <person name="Jiang Y.-P."/>
            <person name="Ballou L.M."/>
            <person name="Yue Z."/>
            <person name="Lin R.Z."/>
            <person name="Zong W.-X."/>
        </authorList>
    </citation>
    <scope>INTERACTION WITH PIK3CB</scope>
</reference>
<reference key="14">
    <citation type="journal article" date="2012" name="J. Biol. Chem.">
        <title>Receptor signaling lymphocyte-activation molecule family 1 (Slamf1) regulates membrane fusion and NADPH oxidase 2 (NOX2) activity by recruiting a Beclin-1/Vps34/ultraviolet radiation resistance-associated gene (UVRAG) complex.</title>
        <authorList>
            <person name="Ma C."/>
            <person name="Wang N."/>
            <person name="Detre C."/>
            <person name="Wang G."/>
            <person name="O'Keeffe M."/>
            <person name="Terhorst C."/>
        </authorList>
    </citation>
    <scope>INTERACTION WITH SLAMF1</scope>
</reference>
<reference key="15">
    <citation type="journal article" date="2013" name="Cell">
        <title>Differential regulation of distinct Vps34 complexes by AMPK in nutrient stress and autophagy.</title>
        <authorList>
            <person name="Kim J."/>
            <person name="Kim Y.C."/>
            <person name="Fang C."/>
            <person name="Russell R.C."/>
            <person name="Kim J.H."/>
            <person name="Fan W."/>
            <person name="Liu R."/>
            <person name="Zhong Q."/>
            <person name="Guan K.L."/>
        </authorList>
    </citation>
    <scope>PHOSPHORYLATION AT SER-91 AND SER-94</scope>
    <scope>MUTAGENESIS OF SER-91 AND SER-94</scope>
    <scope>IDENTIFICATION IN A COMPLEX WITH PIK3C3; PIK3R4; UVRAG AND ATG14</scope>
</reference>
<reference key="16">
    <citation type="journal article" date="2014" name="PLoS Genet.">
        <title>Beclin 1 is required for neuron viability and regulates endosome pathways via the UVRAG-VPS34 complex.</title>
        <authorList>
            <person name="McKnight N.C."/>
            <person name="Zhong Y."/>
            <person name="Wold M.S."/>
            <person name="Gong S."/>
            <person name="Phillips G.R."/>
            <person name="Dou Z."/>
            <person name="Zhao Y."/>
            <person name="Heintz N."/>
            <person name="Zong W.X."/>
            <person name="Yue Z."/>
        </authorList>
    </citation>
    <scope>FUNCTION</scope>
    <scope>DISRUPTION PHENOTYPE</scope>
    <scope>SUBCELLULAR LOCATION</scope>
</reference>
<reference key="17">
    <citation type="journal article" date="2017" name="Nature">
        <title>Polyglutamine tracts regulate beclin 1-dependent autophagy.</title>
        <authorList>
            <person name="Ashkenazi A."/>
            <person name="Bento C.F."/>
            <person name="Ricketts T."/>
            <person name="Vicinanza M."/>
            <person name="Siddiqi F."/>
            <person name="Pavel M."/>
            <person name="Squitieri F."/>
            <person name="Hardenberg M.C."/>
            <person name="Imarisio S."/>
            <person name="Menzies F.M."/>
            <person name="Rubinsztein D.C."/>
        </authorList>
    </citation>
    <scope>FUNCTION</scope>
</reference>
<reference key="18">
    <citation type="journal article" date="2018" name="Biochim. Biophys. Acta">
        <title>TRIM50 regulates Beclin 1 proautophagic activity.</title>
        <authorList>
            <person name="Fusco C."/>
            <person name="Mandriani B."/>
            <person name="Di Rienzo M."/>
            <person name="Micale L."/>
            <person name="Malerba N."/>
            <person name="Cocciadiferro D."/>
            <person name="Sjoettem E."/>
            <person name="Augello B."/>
            <person name="Squeo G.M."/>
            <person name="Pellico M.T."/>
            <person name="Jain A."/>
            <person name="Johansen T."/>
            <person name="Fimia G.M."/>
            <person name="Merla G."/>
        </authorList>
    </citation>
    <scope>INTERACTION WITH TRIM50</scope>
</reference>
<reference key="19">
    <citation type="journal article" date="2021" name="Dev. Cell">
        <title>Autophagic elimination of ribosomes during spermiogenesis provides energy for flagellar motility.</title>
        <authorList>
            <person name="Lei Y."/>
            <person name="Zhang X."/>
            <person name="Xu Q."/>
            <person name="Liu S."/>
            <person name="Li C."/>
            <person name="Jiang H."/>
            <person name="Lin H."/>
            <person name="Kong E."/>
            <person name="Liu J."/>
            <person name="Qi S."/>
            <person name="Li H."/>
            <person name="Xu W."/>
            <person name="Lu K."/>
        </authorList>
    </citation>
    <scope>INTERACTION WITH ARMC3</scope>
</reference>
<reference key="20">
    <citation type="journal article" date="2008" name="PLoS Pathog.">
        <title>Structural and biochemical bases for the inhibition of autophagy and apoptosis by viral BCL-2 of murine gamma-herpesvirus 68.</title>
        <authorList>
            <person name="Ku B."/>
            <person name="Woo J.S."/>
            <person name="Liang C."/>
            <person name="Lee K.H."/>
            <person name="Hong H.S."/>
            <person name="E X."/>
            <person name="Kim K.S."/>
            <person name="Jung J.U."/>
            <person name="Oh B.H."/>
        </authorList>
    </citation>
    <scope>X-RAY CRYSTALLOGRAPHY (2.3 ANGSTROMS) OF 106-124 IN COMPLEX WITH MUHV-4 M11 (MICROBIAL INFECTION)</scope>
</reference>
<feature type="chain" id="PRO_0000218556" description="Beclin-1">
    <location>
        <begin position="1"/>
        <end position="448"/>
    </location>
</feature>
<feature type="chain" id="PRO_0000435038" description="Beclin-1-C 37 kDa" evidence="22">
    <location>
        <begin position="132"/>
        <end position="448"/>
    </location>
</feature>
<feature type="chain" id="PRO_0000435039" description="Beclin-1-C 35 kDa" evidence="22">
    <location>
        <begin position="148"/>
        <end position="448"/>
    </location>
</feature>
<feature type="region of interest" description="Disordered" evidence="4">
    <location>
        <begin position="47"/>
        <end position="66"/>
    </location>
</feature>
<feature type="region of interest" description="Interaction with BCL2 and BCL2L1 isoform Bcl-X(L)" evidence="1">
    <location>
        <begin position="110"/>
        <end position="157"/>
    </location>
</feature>
<feature type="region of interest" description="Evolutionary conserved domain (ECD)" evidence="23">
    <location>
        <begin position="243"/>
        <end position="448"/>
    </location>
</feature>
<feature type="region of interest" description="Required for membrane-association" evidence="1">
    <location>
        <begin position="423"/>
        <end position="448"/>
    </location>
</feature>
<feature type="coiled-coil region" evidence="3">
    <location>
        <begin position="140"/>
        <end position="268"/>
    </location>
</feature>
<feature type="short sequence motif" description="BH3" evidence="1">
    <location>
        <begin position="106"/>
        <end position="125"/>
    </location>
</feature>
<feature type="modified residue" description="N-acetylmethionine" evidence="1">
    <location>
        <position position="1"/>
    </location>
</feature>
<feature type="modified residue" description="Phosphoserine" evidence="1">
    <location>
        <position position="14"/>
    </location>
</feature>
<feature type="modified residue" description="Phosphoserine" evidence="1">
    <location>
        <position position="29"/>
    </location>
</feature>
<feature type="modified residue" description="Phosphoserine; by AMPK" evidence="1">
    <location>
        <position position="88"/>
    </location>
</feature>
<feature type="modified residue" description="Phosphoserine; by AMPK" evidence="15">
    <location>
        <position position="91"/>
    </location>
</feature>
<feature type="modified residue" description="Phosphoserine; by AMPK" evidence="15">
    <location>
        <position position="94"/>
    </location>
</feature>
<feature type="modified residue" description="Phosphothreonine; by DAPK1" evidence="1">
    <location>
        <position position="117"/>
    </location>
</feature>
<feature type="cross-link" description="Glycyl lysine isopeptide (Lys-Gly) (interchain with G-Cter in ubiquitin)" evidence="1">
    <location>
        <position position="400"/>
    </location>
</feature>
<feature type="cross-link" description="Glycyl lysine isopeptide (Lys-Gly) (interchain with G-Cter in ubiquitin)" evidence="1">
    <location>
        <position position="435"/>
    </location>
</feature>
<feature type="mutagenesis site" description="Complete loss of phosphorylation. Complete loss of phosphorylation and defective autophagic function; when associated with Ala-94." evidence="15">
    <original>S</original>
    <variation>A</variation>
    <location>
        <position position="91"/>
    </location>
</feature>
<feature type="mutagenesis site" description="Partial loss of phosphorylation. Complete loss of phosphorylation and defective autophagic function; when associated with Ala-91." evidence="15">
    <original>S</original>
    <variation>A</variation>
    <location>
        <position position="94"/>
    </location>
</feature>
<feature type="sequence conflict" description="In Ref. 2; AAC68654." evidence="21" ref="2">
    <original>T</original>
    <variation>A</variation>
    <location>
        <position position="37"/>
    </location>
</feature>
<feature type="sequence conflict" description="In Ref. 2; AAC68654." evidence="21" ref="2">
    <original>Q</original>
    <variation>H</variation>
    <location>
        <position position="228"/>
    </location>
</feature>
<feature type="sequence conflict" description="In Ref. 2; AAC68654." evidence="21" ref="2">
    <original>F</original>
    <variation>L</variation>
    <location>
        <position position="268"/>
    </location>
</feature>
<feature type="helix" evidence="24">
    <location>
        <begin position="107"/>
        <end position="121"/>
    </location>
</feature>
<feature type="helix" evidence="25">
    <location>
        <begin position="176"/>
        <end position="221"/>
    </location>
</feature>
<accession>O88597</accession>
<accession>Q99J03</accession>
<dbReference type="EMBL" id="AF077302">
    <property type="protein sequence ID" value="AAC68654.2"/>
    <property type="molecule type" value="mRNA"/>
</dbReference>
<dbReference type="EMBL" id="AK032176">
    <property type="protein sequence ID" value="BAC27745.1"/>
    <property type="molecule type" value="mRNA"/>
</dbReference>
<dbReference type="EMBL" id="AK050329">
    <property type="protein sequence ID" value="BAC34192.1"/>
    <property type="molecule type" value="mRNA"/>
</dbReference>
<dbReference type="EMBL" id="AK083800">
    <property type="protein sequence ID" value="BAC39021.1"/>
    <property type="molecule type" value="mRNA"/>
</dbReference>
<dbReference type="EMBL" id="AL590969">
    <property type="status" value="NOT_ANNOTATED_CDS"/>
    <property type="molecule type" value="Genomic_DNA"/>
</dbReference>
<dbReference type="EMBL" id="BC005770">
    <property type="protein sequence ID" value="AAH05770.1"/>
    <property type="molecule type" value="mRNA"/>
</dbReference>
<dbReference type="CCDS" id="CCDS25462.1"/>
<dbReference type="RefSeq" id="NP_062530.2">
    <property type="nucleotide sequence ID" value="NM_019584.3"/>
</dbReference>
<dbReference type="PDB" id="3BL2">
    <property type="method" value="X-ray"/>
    <property type="resolution" value="2.30 A"/>
    <property type="chains" value="C/D=106-124"/>
</dbReference>
<dbReference type="PDB" id="5YR0">
    <property type="method" value="X-ray"/>
    <property type="resolution" value="1.90 A"/>
    <property type="chains" value="A=174-223"/>
</dbReference>
<dbReference type="PDBsum" id="3BL2"/>
<dbReference type="PDBsum" id="5YR0"/>
<dbReference type="SMR" id="O88597"/>
<dbReference type="BioGRID" id="207843">
    <property type="interactions" value="13"/>
</dbReference>
<dbReference type="ComplexPortal" id="CPX-75">
    <property type="entry name" value="Phosphatidylinositol 3-kinase complex, class III, ATG14 variant"/>
</dbReference>
<dbReference type="ComplexPortal" id="CPX-76">
    <property type="entry name" value="Phosphatidylinositol 3-kinase complex, class III, UVRAG variant"/>
</dbReference>
<dbReference type="CORUM" id="O88597"/>
<dbReference type="DIP" id="DIP-41636N"/>
<dbReference type="FunCoup" id="O88597">
    <property type="interactions" value="4129"/>
</dbReference>
<dbReference type="IntAct" id="O88597">
    <property type="interactions" value="17"/>
</dbReference>
<dbReference type="MINT" id="O88597"/>
<dbReference type="STRING" id="10090.ENSMUSP00000119369"/>
<dbReference type="GlyGen" id="O88597">
    <property type="glycosylation" value="1 site, 1 N-linked glycan (1 site)"/>
</dbReference>
<dbReference type="iPTMnet" id="O88597"/>
<dbReference type="PhosphoSitePlus" id="O88597"/>
<dbReference type="PaxDb" id="10090-ENSMUSP00000119369"/>
<dbReference type="ProteomicsDB" id="273601"/>
<dbReference type="Pumba" id="O88597"/>
<dbReference type="Antibodypedia" id="4116">
    <property type="antibodies" value="1614 antibodies from 48 providers"/>
</dbReference>
<dbReference type="DNASU" id="56208"/>
<dbReference type="Ensembl" id="ENSMUST00000130916.8">
    <property type="protein sequence ID" value="ENSMUSP00000119369.2"/>
    <property type="gene ID" value="ENSMUSG00000035086.14"/>
</dbReference>
<dbReference type="GeneID" id="56208"/>
<dbReference type="KEGG" id="mmu:56208"/>
<dbReference type="UCSC" id="uc007loj.1">
    <property type="organism name" value="mouse"/>
</dbReference>
<dbReference type="AGR" id="MGI:1891828"/>
<dbReference type="CTD" id="8678"/>
<dbReference type="MGI" id="MGI:1891828">
    <property type="gene designation" value="Becn1"/>
</dbReference>
<dbReference type="VEuPathDB" id="HostDB:ENSMUSG00000035086"/>
<dbReference type="eggNOG" id="KOG2751">
    <property type="taxonomic scope" value="Eukaryota"/>
</dbReference>
<dbReference type="GeneTree" id="ENSGT00390000008164"/>
<dbReference type="HOGENOM" id="CLU_024219_4_1_1"/>
<dbReference type="InParanoid" id="O88597"/>
<dbReference type="OMA" id="EWDVYKA"/>
<dbReference type="OrthoDB" id="20368at2759"/>
<dbReference type="PhylomeDB" id="O88597"/>
<dbReference type="TreeFam" id="TF314282"/>
<dbReference type="Reactome" id="R-MMU-1169408">
    <property type="pathway name" value="ISG15 antiviral mechanism"/>
</dbReference>
<dbReference type="Reactome" id="R-MMU-1632852">
    <property type="pathway name" value="Macroautophagy"/>
</dbReference>
<dbReference type="Reactome" id="R-MMU-5689880">
    <property type="pathway name" value="Ub-specific processing proteases"/>
</dbReference>
<dbReference type="BioGRID-ORCS" id="56208">
    <property type="hits" value="18 hits in 81 CRISPR screens"/>
</dbReference>
<dbReference type="ChiTaRS" id="Becn1">
    <property type="organism name" value="mouse"/>
</dbReference>
<dbReference type="PRO" id="PR:O88597"/>
<dbReference type="Proteomes" id="UP000000589">
    <property type="component" value="Chromosome 11"/>
</dbReference>
<dbReference type="RNAct" id="O88597">
    <property type="molecule type" value="protein"/>
</dbReference>
<dbReference type="Bgee" id="ENSMUSG00000035086">
    <property type="expression patterns" value="Expressed in renal medulla collecting duct and 257 other cell types or tissues"/>
</dbReference>
<dbReference type="ExpressionAtlas" id="O88597">
    <property type="expression patterns" value="baseline and differential"/>
</dbReference>
<dbReference type="GO" id="GO:0005776">
    <property type="term" value="C:autophagosome"/>
    <property type="evidence" value="ECO:0000314"/>
    <property type="project" value="MGI"/>
</dbReference>
<dbReference type="GO" id="GO:0005737">
    <property type="term" value="C:cytoplasm"/>
    <property type="evidence" value="ECO:0000314"/>
    <property type="project" value="MGI"/>
</dbReference>
<dbReference type="GO" id="GO:0032473">
    <property type="term" value="C:cytoplasmic side of mitochondrial outer membrane"/>
    <property type="evidence" value="ECO:0007669"/>
    <property type="project" value="Ensembl"/>
</dbReference>
<dbReference type="GO" id="GO:0031410">
    <property type="term" value="C:cytoplasmic vesicle"/>
    <property type="evidence" value="ECO:0000314"/>
    <property type="project" value="MGI"/>
</dbReference>
<dbReference type="GO" id="GO:0005856">
    <property type="term" value="C:cytoskeleton"/>
    <property type="evidence" value="ECO:0000250"/>
    <property type="project" value="MGI"/>
</dbReference>
<dbReference type="GO" id="GO:0005829">
    <property type="term" value="C:cytosol"/>
    <property type="evidence" value="ECO:0007669"/>
    <property type="project" value="Ensembl"/>
</dbReference>
<dbReference type="GO" id="GO:0030425">
    <property type="term" value="C:dendrite"/>
    <property type="evidence" value="ECO:0007669"/>
    <property type="project" value="Ensembl"/>
</dbReference>
<dbReference type="GO" id="GO:0005789">
    <property type="term" value="C:endoplasmic reticulum membrane"/>
    <property type="evidence" value="ECO:0007669"/>
    <property type="project" value="UniProtKB-SubCell"/>
</dbReference>
<dbReference type="GO" id="GO:0010008">
    <property type="term" value="C:endosome membrane"/>
    <property type="evidence" value="ECO:0007669"/>
    <property type="project" value="UniProtKB-SubCell"/>
</dbReference>
<dbReference type="GO" id="GO:0016020">
    <property type="term" value="C:membrane"/>
    <property type="evidence" value="ECO:0000250"/>
    <property type="project" value="MGI"/>
</dbReference>
<dbReference type="GO" id="GO:0016604">
    <property type="term" value="C:nuclear body"/>
    <property type="evidence" value="ECO:0007669"/>
    <property type="project" value="Ensembl"/>
</dbReference>
<dbReference type="GO" id="GO:0045335">
    <property type="term" value="C:phagocytic vesicle"/>
    <property type="evidence" value="ECO:0000314"/>
    <property type="project" value="MGI"/>
</dbReference>
<dbReference type="GO" id="GO:0035032">
    <property type="term" value="C:phosphatidylinositol 3-kinase complex, class III"/>
    <property type="evidence" value="ECO:0000314"/>
    <property type="project" value="UniProtKB"/>
</dbReference>
<dbReference type="GO" id="GO:0032991">
    <property type="term" value="C:protein-containing complex"/>
    <property type="evidence" value="ECO:0000314"/>
    <property type="project" value="MGI"/>
</dbReference>
<dbReference type="GO" id="GO:0005802">
    <property type="term" value="C:trans-Golgi network"/>
    <property type="evidence" value="ECO:0000314"/>
    <property type="project" value="MGI"/>
</dbReference>
<dbReference type="GO" id="GO:0051020">
    <property type="term" value="F:GTPase binding"/>
    <property type="evidence" value="ECO:0007669"/>
    <property type="project" value="Ensembl"/>
</dbReference>
<dbReference type="GO" id="GO:0042802">
    <property type="term" value="F:identical protein binding"/>
    <property type="evidence" value="ECO:0000353"/>
    <property type="project" value="MGI"/>
</dbReference>
<dbReference type="GO" id="GO:0043548">
    <property type="term" value="F:phosphatidylinositol 3-kinase binding"/>
    <property type="evidence" value="ECO:0007669"/>
    <property type="project" value="Ensembl"/>
</dbReference>
<dbReference type="GO" id="GO:0019901">
    <property type="term" value="F:protein kinase binding"/>
    <property type="evidence" value="ECO:0007669"/>
    <property type="project" value="Ensembl"/>
</dbReference>
<dbReference type="GO" id="GO:0030674">
    <property type="term" value="F:protein-macromolecule adaptor activity"/>
    <property type="evidence" value="ECO:0000314"/>
    <property type="project" value="UniProt"/>
</dbReference>
<dbReference type="GO" id="GO:0031625">
    <property type="term" value="F:ubiquitin protein ligase binding"/>
    <property type="evidence" value="ECO:0007669"/>
    <property type="project" value="Ensembl"/>
</dbReference>
<dbReference type="GO" id="GO:0050435">
    <property type="term" value="P:amyloid-beta metabolic process"/>
    <property type="evidence" value="ECO:0000315"/>
    <property type="project" value="MGI"/>
</dbReference>
<dbReference type="GO" id="GO:0001525">
    <property type="term" value="P:angiogenesis"/>
    <property type="evidence" value="ECO:0000304"/>
    <property type="project" value="UniProtKB"/>
</dbReference>
<dbReference type="GO" id="GO:0006915">
    <property type="term" value="P:apoptotic process"/>
    <property type="evidence" value="ECO:0007669"/>
    <property type="project" value="UniProtKB-KW"/>
</dbReference>
<dbReference type="GO" id="GO:0000045">
    <property type="term" value="P:autophagosome assembly"/>
    <property type="evidence" value="ECO:0000315"/>
    <property type="project" value="UniProtKB"/>
</dbReference>
<dbReference type="GO" id="GO:0097352">
    <property type="term" value="P:autophagosome maturation"/>
    <property type="evidence" value="ECO:0000266"/>
    <property type="project" value="ComplexPortal"/>
</dbReference>
<dbReference type="GO" id="GO:0006914">
    <property type="term" value="P:autophagy"/>
    <property type="evidence" value="ECO:0000314"/>
    <property type="project" value="CACAO"/>
</dbReference>
<dbReference type="GO" id="GO:0051301">
    <property type="term" value="P:cell division"/>
    <property type="evidence" value="ECO:0007669"/>
    <property type="project" value="UniProtKB-KW"/>
</dbReference>
<dbReference type="GO" id="GO:0071275">
    <property type="term" value="P:cellular response to aluminum ion"/>
    <property type="evidence" value="ECO:0007669"/>
    <property type="project" value="Ensembl"/>
</dbReference>
<dbReference type="GO" id="GO:0034198">
    <property type="term" value="P:cellular response to amino acid starvation"/>
    <property type="evidence" value="ECO:0007669"/>
    <property type="project" value="Ensembl"/>
</dbReference>
<dbReference type="GO" id="GO:0071280">
    <property type="term" value="P:cellular response to copper ion"/>
    <property type="evidence" value="ECO:0007669"/>
    <property type="project" value="Ensembl"/>
</dbReference>
<dbReference type="GO" id="GO:0071364">
    <property type="term" value="P:cellular response to epidermal growth factor stimulus"/>
    <property type="evidence" value="ECO:0007669"/>
    <property type="project" value="Ensembl"/>
</dbReference>
<dbReference type="GO" id="GO:0042149">
    <property type="term" value="P:cellular response to glucose starvation"/>
    <property type="evidence" value="ECO:0000314"/>
    <property type="project" value="UniProtKB"/>
</dbReference>
<dbReference type="GO" id="GO:0070301">
    <property type="term" value="P:cellular response to hydrogen peroxide"/>
    <property type="evidence" value="ECO:0007669"/>
    <property type="project" value="Ensembl"/>
</dbReference>
<dbReference type="GO" id="GO:0090650">
    <property type="term" value="P:cellular response to oxygen-glucose deprivation"/>
    <property type="evidence" value="ECO:0007669"/>
    <property type="project" value="Ensembl"/>
</dbReference>
<dbReference type="GO" id="GO:0007623">
    <property type="term" value="P:circadian rhythm"/>
    <property type="evidence" value="ECO:0007669"/>
    <property type="project" value="Ensembl"/>
</dbReference>
<dbReference type="GO" id="GO:0002753">
    <property type="term" value="P:cytoplasmic pattern recognition receptor signaling pathway"/>
    <property type="evidence" value="ECO:0007669"/>
    <property type="project" value="Ensembl"/>
</dbReference>
<dbReference type="GO" id="GO:0051607">
    <property type="term" value="P:defense response to virus"/>
    <property type="evidence" value="ECO:0007669"/>
    <property type="project" value="UniProtKB-KW"/>
</dbReference>
<dbReference type="GO" id="GO:0045022">
    <property type="term" value="P:early endosome to late endosome transport"/>
    <property type="evidence" value="ECO:0000250"/>
    <property type="project" value="UniProtKB"/>
</dbReference>
<dbReference type="GO" id="GO:0043652">
    <property type="term" value="P:engulfment of apoptotic cell"/>
    <property type="evidence" value="ECO:0000315"/>
    <property type="project" value="CACAO"/>
</dbReference>
<dbReference type="GO" id="GO:0007254">
    <property type="term" value="P:JNK cascade"/>
    <property type="evidence" value="ECO:0007669"/>
    <property type="project" value="Ensembl"/>
</dbReference>
<dbReference type="GO" id="GO:0007040">
    <property type="term" value="P:lysosome organization"/>
    <property type="evidence" value="ECO:0000315"/>
    <property type="project" value="MGI"/>
</dbReference>
<dbReference type="GO" id="GO:0016236">
    <property type="term" value="P:macroautophagy"/>
    <property type="evidence" value="ECO:0000315"/>
    <property type="project" value="UniProtKB"/>
</dbReference>
<dbReference type="GO" id="GO:0000423">
    <property type="term" value="P:mitophagy"/>
    <property type="evidence" value="ECO:0007669"/>
    <property type="project" value="Ensembl"/>
</dbReference>
<dbReference type="GO" id="GO:0007080">
    <property type="term" value="P:mitotic metaphase chromosome alignment"/>
    <property type="evidence" value="ECO:0007669"/>
    <property type="project" value="Ensembl"/>
</dbReference>
<dbReference type="GO" id="GO:0043066">
    <property type="term" value="P:negative regulation of apoptotic process"/>
    <property type="evidence" value="ECO:0007669"/>
    <property type="project" value="Ensembl"/>
</dbReference>
<dbReference type="GO" id="GO:1902902">
    <property type="term" value="P:negative regulation of autophagosome assembly"/>
    <property type="evidence" value="ECO:0000315"/>
    <property type="project" value="MGI"/>
</dbReference>
<dbReference type="GO" id="GO:0010507">
    <property type="term" value="P:negative regulation of autophagy"/>
    <property type="evidence" value="ECO:0000315"/>
    <property type="project" value="MGI"/>
</dbReference>
<dbReference type="GO" id="GO:0008285">
    <property type="term" value="P:negative regulation of cell population proliferation"/>
    <property type="evidence" value="ECO:0000314"/>
    <property type="project" value="MGI"/>
</dbReference>
<dbReference type="GO" id="GO:1905672">
    <property type="term" value="P:negative regulation of lysosome organization"/>
    <property type="evidence" value="ECO:0007669"/>
    <property type="project" value="Ensembl"/>
</dbReference>
<dbReference type="GO" id="GO:0043069">
    <property type="term" value="P:negative regulation of programmed cell death"/>
    <property type="evidence" value="ECO:0000266"/>
    <property type="project" value="MGI"/>
</dbReference>
<dbReference type="GO" id="GO:0048666">
    <property type="term" value="P:neuron development"/>
    <property type="evidence" value="ECO:0000315"/>
    <property type="project" value="MGI"/>
</dbReference>
<dbReference type="GO" id="GO:0038066">
    <property type="term" value="P:p38MAPK cascade"/>
    <property type="evidence" value="ECO:0007669"/>
    <property type="project" value="Ensembl"/>
</dbReference>
<dbReference type="GO" id="GO:0036092">
    <property type="term" value="P:phosphatidylinositol-3-phosphate biosynthetic process"/>
    <property type="evidence" value="ECO:0000266"/>
    <property type="project" value="ComplexPortal"/>
</dbReference>
<dbReference type="GO" id="GO:1902425">
    <property type="term" value="P:positive regulation of attachment of mitotic spindle microtubules to kinetochore"/>
    <property type="evidence" value="ECO:0007669"/>
    <property type="project" value="Ensembl"/>
</dbReference>
<dbReference type="GO" id="GO:2000786">
    <property type="term" value="P:positive regulation of autophagosome assembly"/>
    <property type="evidence" value="ECO:0007669"/>
    <property type="project" value="Ensembl"/>
</dbReference>
<dbReference type="GO" id="GO:0010508">
    <property type="term" value="P:positive regulation of autophagy"/>
    <property type="evidence" value="ECO:0000250"/>
    <property type="project" value="UniProtKB"/>
</dbReference>
<dbReference type="GO" id="GO:0010613">
    <property type="term" value="P:positive regulation of cardiac muscle hypertrophy"/>
    <property type="evidence" value="ECO:0000315"/>
    <property type="project" value="MGI"/>
</dbReference>
<dbReference type="GO" id="GO:2001244">
    <property type="term" value="P:positive regulation of intrinsic apoptotic signaling pathway"/>
    <property type="evidence" value="ECO:0000250"/>
    <property type="project" value="UniProtKB"/>
</dbReference>
<dbReference type="GO" id="GO:0062029">
    <property type="term" value="P:positive regulation of stress granule assembly"/>
    <property type="evidence" value="ECO:0007669"/>
    <property type="project" value="Ensembl"/>
</dbReference>
<dbReference type="GO" id="GO:0006622">
    <property type="term" value="P:protein targeting to lysosome"/>
    <property type="evidence" value="ECO:0000303"/>
    <property type="project" value="ComplexPortal"/>
</dbReference>
<dbReference type="GO" id="GO:0065003">
    <property type="term" value="P:protein-containing complex assembly"/>
    <property type="evidence" value="ECO:0007669"/>
    <property type="project" value="Ensembl"/>
</dbReference>
<dbReference type="GO" id="GO:0032801">
    <property type="term" value="P:receptor catabolic process"/>
    <property type="evidence" value="ECO:0007669"/>
    <property type="project" value="Ensembl"/>
</dbReference>
<dbReference type="GO" id="GO:0010506">
    <property type="term" value="P:regulation of autophagy"/>
    <property type="evidence" value="ECO:0000266"/>
    <property type="project" value="ComplexPortal"/>
</dbReference>
<dbReference type="GO" id="GO:0032465">
    <property type="term" value="P:regulation of cytokinesis"/>
    <property type="evidence" value="ECO:0000250"/>
    <property type="project" value="UniProtKB"/>
</dbReference>
<dbReference type="GO" id="GO:0016241">
    <property type="term" value="P:regulation of macroautophagy"/>
    <property type="evidence" value="ECO:0000266"/>
    <property type="project" value="ComplexPortal"/>
</dbReference>
<dbReference type="GO" id="GO:0001666">
    <property type="term" value="P:response to hypoxia"/>
    <property type="evidence" value="ECO:0007669"/>
    <property type="project" value="Ensembl"/>
</dbReference>
<dbReference type="GO" id="GO:0010040">
    <property type="term" value="P:response to iron(II) ion"/>
    <property type="evidence" value="ECO:0007669"/>
    <property type="project" value="Ensembl"/>
</dbReference>
<dbReference type="GO" id="GO:0010288">
    <property type="term" value="P:response to lead ion"/>
    <property type="evidence" value="ECO:0007669"/>
    <property type="project" value="Ensembl"/>
</dbReference>
<dbReference type="GO" id="GO:0098780">
    <property type="term" value="P:response to mitochondrial depolarisation"/>
    <property type="evidence" value="ECO:0007669"/>
    <property type="project" value="Ensembl"/>
</dbReference>
<dbReference type="GO" id="GO:0051707">
    <property type="term" value="P:response to other organism"/>
    <property type="evidence" value="ECO:0000314"/>
    <property type="project" value="MGI"/>
</dbReference>
<dbReference type="GO" id="GO:0033197">
    <property type="term" value="P:response to vitamin E"/>
    <property type="evidence" value="ECO:0007669"/>
    <property type="project" value="Ensembl"/>
</dbReference>
<dbReference type="GO" id="GO:0009410">
    <property type="term" value="P:response to xenobiotic stimulus"/>
    <property type="evidence" value="ECO:0007669"/>
    <property type="project" value="Ensembl"/>
</dbReference>
<dbReference type="GO" id="GO:0060395">
    <property type="term" value="P:SMAD protein signal transduction"/>
    <property type="evidence" value="ECO:0007669"/>
    <property type="project" value="Ensembl"/>
</dbReference>
<dbReference type="DisProt" id="DP01612"/>
<dbReference type="FunFam" id="1.10.418.40:FF:000001">
    <property type="entry name" value="beclin-1 isoform X1"/>
    <property type="match status" value="1"/>
</dbReference>
<dbReference type="Gene3D" id="6.10.250.3110">
    <property type="match status" value="1"/>
</dbReference>
<dbReference type="Gene3D" id="1.10.418.40">
    <property type="entry name" value="Autophagy protein 6/Beclin 1"/>
    <property type="match status" value="1"/>
</dbReference>
<dbReference type="IDEAL" id="IID50268"/>
<dbReference type="InterPro" id="IPR007243">
    <property type="entry name" value="Atg6/Beclin"/>
</dbReference>
<dbReference type="InterPro" id="IPR038274">
    <property type="entry name" value="Atg6/Beclin_C_sf"/>
</dbReference>
<dbReference type="InterPro" id="IPR041691">
    <property type="entry name" value="Atg6/beclin_CC"/>
</dbReference>
<dbReference type="InterPro" id="IPR040455">
    <property type="entry name" value="Atg6_BARA"/>
</dbReference>
<dbReference type="InterPro" id="IPR029318">
    <property type="entry name" value="BH3_dom"/>
</dbReference>
<dbReference type="PANTHER" id="PTHR12768">
    <property type="entry name" value="BECLIN 1"/>
    <property type="match status" value="1"/>
</dbReference>
<dbReference type="PANTHER" id="PTHR12768:SF6">
    <property type="entry name" value="BECLIN-1"/>
    <property type="match status" value="1"/>
</dbReference>
<dbReference type="Pfam" id="PF04111">
    <property type="entry name" value="APG6"/>
    <property type="match status" value="1"/>
</dbReference>
<dbReference type="Pfam" id="PF17675">
    <property type="entry name" value="APG6_N"/>
    <property type="match status" value="1"/>
</dbReference>
<dbReference type="Pfam" id="PF15285">
    <property type="entry name" value="BH3"/>
    <property type="match status" value="1"/>
</dbReference>
<sequence>MEGSKASSSTMQVSFVCQRCSQPLKLDTSFKILDRVTIQELTAPLLTTAQAKPGETQEEEANSGEEPFIETRQDGVSRRFIPPARMMSTESANSFTLIGEASDGGTMENLSRRLKVTGDLFDIMSGQTDVDHPLCEECTDTLLDQLDTQLNVTENECQNYKRCLEILEQMNEDDSEQLQRELKELALEEERLIQELEDVEKNRKVVAENLEKVQAEAERLDQEEAQYQREYSEFKRQQLELDDELKSVENQVRYAQIQLDKLKKTNVFNATFHIWHSGQFGTINNFRLGRLPSVPVEWNEINAAWGQTVLLLHALANKMGLKFQRYRLVPYGNHSYLESLTDKSKELPLYCSGGLRFFWDNKFDHAMVAFLDCVQQFKEEVEKGETRFCLPYRMDVEKGKIEDTGGSGGSYSIKTQFNSEEQWTKALKFMLTNLKWGLAWVSSQFYNK</sequence>
<keyword id="KW-0002">3D-structure</keyword>
<keyword id="KW-0007">Acetylation</keyword>
<keyword id="KW-0051">Antiviral defense</keyword>
<keyword id="KW-0053">Apoptosis</keyword>
<keyword id="KW-0072">Autophagy</keyword>
<keyword id="KW-0131">Cell cycle</keyword>
<keyword id="KW-0132">Cell division</keyword>
<keyword id="KW-0175">Coiled coil</keyword>
<keyword id="KW-0963">Cytoplasm</keyword>
<keyword id="KW-0968">Cytoplasmic vesicle</keyword>
<keyword id="KW-0254">Endocytosis</keyword>
<keyword id="KW-0256">Endoplasmic reticulum</keyword>
<keyword id="KW-0967">Endosome</keyword>
<keyword id="KW-0333">Golgi apparatus</keyword>
<keyword id="KW-1017">Isopeptide bond</keyword>
<keyword id="KW-0472">Membrane</keyword>
<keyword id="KW-0496">Mitochondrion</keyword>
<keyword id="KW-0539">Nucleus</keyword>
<keyword id="KW-0597">Phosphoprotein</keyword>
<keyword id="KW-1185">Reference proteome</keyword>
<keyword id="KW-0832">Ubl conjugation</keyword>
<name>BECN1_MOUSE</name>
<evidence type="ECO:0000250" key="1">
    <source>
        <dbReference type="UniProtKB" id="Q14457"/>
    </source>
</evidence>
<evidence type="ECO:0000250" key="2">
    <source>
        <dbReference type="UniProtKB" id="Q91XJ1"/>
    </source>
</evidence>
<evidence type="ECO:0000255" key="3"/>
<evidence type="ECO:0000256" key="4">
    <source>
        <dbReference type="SAM" id="MobiDB-lite"/>
    </source>
</evidence>
<evidence type="ECO:0000269" key="5">
    <source>
    </source>
</evidence>
<evidence type="ECO:0000269" key="6">
    <source>
    </source>
</evidence>
<evidence type="ECO:0000269" key="7">
    <source>
    </source>
</evidence>
<evidence type="ECO:0000269" key="8">
    <source>
    </source>
</evidence>
<evidence type="ECO:0000269" key="9">
    <source>
    </source>
</evidence>
<evidence type="ECO:0000269" key="10">
    <source>
    </source>
</evidence>
<evidence type="ECO:0000269" key="11">
    <source>
    </source>
</evidence>
<evidence type="ECO:0000269" key="12">
    <source>
    </source>
</evidence>
<evidence type="ECO:0000269" key="13">
    <source>
    </source>
</evidence>
<evidence type="ECO:0000269" key="14">
    <source>
    </source>
</evidence>
<evidence type="ECO:0000269" key="15">
    <source>
    </source>
</evidence>
<evidence type="ECO:0000269" key="16">
    <source>
    </source>
</evidence>
<evidence type="ECO:0000269" key="17">
    <source>
    </source>
</evidence>
<evidence type="ECO:0000269" key="18">
    <source>
    </source>
</evidence>
<evidence type="ECO:0000269" key="19">
    <source>
    </source>
</evidence>
<evidence type="ECO:0000303" key="20">
    <source>
    </source>
</evidence>
<evidence type="ECO:0000305" key="21"/>
<evidence type="ECO:0000305" key="22">
    <source>
    </source>
</evidence>
<evidence type="ECO:0000305" key="23">
    <source>
    </source>
</evidence>
<evidence type="ECO:0007829" key="24">
    <source>
        <dbReference type="PDB" id="3BL2"/>
    </source>
</evidence>
<evidence type="ECO:0007829" key="25">
    <source>
        <dbReference type="PDB" id="5YR0"/>
    </source>
</evidence>
<organism>
    <name type="scientific">Mus musculus</name>
    <name type="common">Mouse</name>
    <dbReference type="NCBI Taxonomy" id="10090"/>
    <lineage>
        <taxon>Eukaryota</taxon>
        <taxon>Metazoa</taxon>
        <taxon>Chordata</taxon>
        <taxon>Craniata</taxon>
        <taxon>Vertebrata</taxon>
        <taxon>Euteleostomi</taxon>
        <taxon>Mammalia</taxon>
        <taxon>Eutheria</taxon>
        <taxon>Euarchontoglires</taxon>
        <taxon>Glires</taxon>
        <taxon>Rodentia</taxon>
        <taxon>Myomorpha</taxon>
        <taxon>Muroidea</taxon>
        <taxon>Muridae</taxon>
        <taxon>Murinae</taxon>
        <taxon>Mus</taxon>
        <taxon>Mus</taxon>
    </lineage>
</organism>
<comment type="function">
    <text evidence="1 5 6 10 16 17">Plays a central role in autophagy (PubMed:10604474, PubMed:12372286, PubMed:19270693, PubMed:28445460). Acts as a core subunit of different PI3K complex forms that mediate formation of phosphatidylinositol 3-phosphate and are believed to play a role in multiple membrane trafficking pathways: PI3KC3-C1 is involved in initiation of autophagosomes and PI3KC3-C2 in maturation of autophagosomes and endocytosis (PubMed:19270693, PubMed:25275521). Involved in regulation of degradative endocytic trafficking and required for the abscission step in cytokinesis, probably in the context of PI3KC3-C2 (By similarity). Essential for the formation of PI3KC3-C2 but not PI3KC3-C1 PI3K complex forms (PubMed:25275521). Involved in endocytosis including endosome formation in neuronal cells (PubMed:25275521). May play a role in antiviral host defense (By similarity).</text>
</comment>
<comment type="function">
    <text evidence="1">Beclin-1-C 35 kDa localized to mitochondria can promote apoptosis; it induces the mitochondrial translocation of BAX and the release of proapoptotic factors (By similarity).</text>
</comment>
<comment type="subunit">
    <text evidence="1 2 6 8 9 10 11 12 14 15 18 19 21 23">A homodimeric form is proposed to exist; this metastable form readily transits to ATG14- or UVRAG-containing complexes with BECN1:UVRAG being more stable than BECN1:ATG14 (By similarity). Component of the PI3K (PI3KC3/PI3K-III/class III phosphatidylinositol 3-kinase) complex whose core is composed of the catalytic subunit PIK3C3, the regulatory subunit PIK3R4 and BECN1, and associates with additional regulatory/auxiliary subunits to form alternative complex forms. Accepted alternative complex forms containing a fourth regulatory subunit in a mutually exclusive manner are PI3K complex I (PI3KC3-C1) containing ATG14, and PI3K complex II (PI3KC3-C2) containing UVRAG (PubMed:19270693, PubMed:23332761). PI3KC3-C1 displays a V-shaped architecture with PIK3R4 serving as a bridge between PIK3C3 and the ATG14:BECN1 subcomplex (By similarity). Both, PI3KC3-C1 and PI3KC3-C2, can associate with further regulatory subunits, such as RUBCN, SH3GLB1/Bif-1 and AMBRA1 (PubMed:19270693). PI3KC3-C1 probably associates with PIK3CB (PubMed:21059846). Forms a complex with PPP2CA and AMBRA1; AMBRA1 and BECN1 components of the complex regulate MYC stability via different pathways (By similarity). Component of the complex, at least composed of LRPPRC, BECN1 and BCL2; the interactions prevent BECN1 from forming an autophagy-inducing complex with PIK3C3 (By similarity). Interacts with AMBRA1, GOPC, GRID2 and PIK3CB (PubMed:12372286, PubMed:17589504). Interacts with BCL2 and BCL2L1 isoform Bcl-X(L); the interaction inhibits BECN1 function in promoting autophagy by interfering with the formation of the PI3K complex (By similarity). Interacts with cytosolic HMGB1; inhibits the interaction of BECN1 and BCL2 leading to promotion of autophagy (PubMed:20819940). Interacts with USP10, USP13, VMP1, DAPK1 (By similarity). Interacts with the poly-Gln domain of ATXN3; the interaction causes deubiquitination at Lys-400 and stabilizes BECN1 (PubMed:28445460). Interacts with SLAMF1 (PubMed:22493499). Interacts with TRIM5; the interaction causes activation of BECN1 by causing its dissociation from its inhibitors BCL2 and TAB2 (By similarity). Interacts with active ULK1 (phosphorylated on 'Ser-317') and MEFV simultaneously (By similarity). Interacts with TRIM50 (PubMed:29604308). Interacts with TRIM16 (By similarity). Interacts with WDR81 and WDR91; negatively regulates the PI3 kinase/PI3K activity associated with endosomal membranes (By similarity). Interacts with LAPTM4B; competes with EGFR for LAPTM4B binding; regulates EGFR activity (By similarity). Interacts with ATG14; this interaction is increased in the absence of TMEM39A (By similarity). Interacts with WASHC1; preventing interaction with AMBRA1 and the DCX(AMBRA1) complex and subsequent ubiquitination (By similarity). Interacts with TRIM17 (By similarity). Interacts with BCL2L10/BCL-B (via BH1 domain) (By similarity). Interacts with SH3BGRL (By similarity). Interacts with Irgm1; enhancing BECN1-interacting partners and influencing the composition of the BECN1 complex (By similarity). Interacts with ARMC3 (PubMed:34428398). Interacts with LRPPRC (By similarity).</text>
</comment>
<comment type="subunit">
    <text evidence="9">(Microbial infection) Interacts with murine gammaherpesvirus 68 M11; the viral protein binds BECN1 with higher affinity than cellular BCL2.</text>
</comment>
<comment type="interaction">
    <interactant intactId="EBI-643716">
        <id>O88597</id>
    </interactant>
    <interactant intactId="EBI-526314">
        <id>P10417</id>
        <label>Bcl2</label>
    </interactant>
    <organismsDiffer>false</organismsDiffer>
    <experiments>11</experiments>
</comment>
<comment type="interaction">
    <interactant intactId="EBI-643716">
        <id>O88597</id>
    </interactant>
    <interactant intactId="EBI-296357">
        <id>Q8BH60</id>
        <label>Gopc</label>
    </interactant>
    <organismsDiffer>false</organismsDiffer>
    <experiments>5</experiments>
</comment>
<comment type="interaction">
    <interactant intactId="EBI-643716">
        <id>O88597</id>
    </interactant>
    <interactant intactId="EBI-6665811">
        <id>P63158</id>
        <label>Hmgb1</label>
    </interactant>
    <organismsDiffer>false</organismsDiffer>
    <experiments>3</experiments>
</comment>
<comment type="interaction">
    <interactant intactId="EBI-643716">
        <id>O88597</id>
    </interactant>
    <interactant intactId="EBI-2365563">
        <id>Q8VCQ3</id>
        <label>Nrbf2</label>
    </interactant>
    <organismsDiffer>false</organismsDiffer>
    <experiments>5</experiments>
</comment>
<comment type="interaction">
    <interactant intactId="EBI-643716">
        <id>O88597</id>
    </interactant>
    <interactant intactId="EBI-6678149">
        <id>Q6PF93</id>
        <label>Pik3c3</label>
    </interactant>
    <organismsDiffer>false</organismsDiffer>
    <experiments>6</experiments>
</comment>
<comment type="subcellular location">
    <subcellularLocation>
        <location evidence="6">Cytoplasm</location>
    </subcellularLocation>
    <subcellularLocation>
        <location evidence="1">Golgi apparatus</location>
        <location evidence="1">trans-Golgi network membrane</location>
        <topology evidence="1">Peripheral membrane protein</topology>
    </subcellularLocation>
    <subcellularLocation>
        <location evidence="1">Endosome membrane</location>
        <topology evidence="1">Peripheral membrane protein</topology>
    </subcellularLocation>
    <subcellularLocation>
        <location evidence="1">Endoplasmic reticulum membrane</location>
        <topology evidence="1">Peripheral membrane protein</topology>
    </subcellularLocation>
    <subcellularLocation>
        <location evidence="1">Mitochondrion membrane</location>
        <topology evidence="1">Peripheral membrane protein</topology>
    </subcellularLocation>
    <subcellularLocation>
        <location evidence="16">Endosome</location>
    </subcellularLocation>
    <subcellularLocation>
        <location evidence="21">Cytoplasmic vesicle</location>
        <location evidence="21">Autophagosome</location>
    </subcellularLocation>
    <text evidence="1 6 16">Interaction with ATG14 promotes translocation to autophagosomes (By similarity). Expressed in dendrites and cell bodies of cerebellar Purkinje cells. Localized to endosomes in neurons (PubMed:25275521).</text>
</comment>
<comment type="subcellular location">
    <molecule>Beclin-1-C 35 kDa</molecule>
    <subcellularLocation>
        <location evidence="13">Mitochondrion</location>
    </subcellularLocation>
    <subcellularLocation>
        <location evidence="1">Nucleus</location>
    </subcellularLocation>
    <subcellularLocation>
        <location evidence="1">Cytoplasm</location>
    </subcellularLocation>
</comment>
<comment type="subcellular location">
    <molecule>Beclin-1-C 37 kDa</molecule>
    <subcellularLocation>
        <location evidence="13">Mitochondrion</location>
    </subcellularLocation>
</comment>
<comment type="domain">
    <text evidence="2">The coiled coil domain can form antiparallel homodimers and mediates dimerization with the coiled coil domains of ATG14 or UVRAG involved in the formation of PI3K complexes.</text>
</comment>
<comment type="domain">
    <text evidence="23">The C-terminal evolutionary conserved domain (ECD) contains poly-Gln-binding domains such as the ATXN3 poly-Gln motif, consistent with structural docking models revealing two highly scored poly-Gln-binding pockets in the ECD. As some binding is observed with BECN1 lacking the ECD, other domains of BECN1 may also interact with ATXN3.</text>
</comment>
<comment type="PTM">
    <text evidence="1 15">Phosphorylation at Thr-117 by DAPK1 reduces its interaction with BCL2 and BCL2L1 and promotes induction of autophagy (By similarity). In response to autophagic stimuli, phosphorylated at serine residues by AMPK in an ATG14-dependent manner, and this phosphorylation is critical for maximally efficient autophagy.</text>
</comment>
<comment type="PTM">
    <text evidence="1 17">Polyubiquitinated by NEDD4, both with 'Lys-11'- and 'Lys-63'-linkages (By similarity). 'Lys-11'-linked polyubiquitination leads to degradation and is enhanced when the stabilizing interaction partner VPS34 is depleted (By similarity). Deubiquitinated by USP10 and USP13, leading to stabilize the PIK3C3/VPS34-containing complexes (By similarity). Polyubiquitinated at Lys-400 with 'Lys-48'-linkages (PubMed:28445460). 'Lys-48'-linked poyubiquitination of Lys-400 leads to degradation (PubMed:28445460). Deubiquitinated by ATXN3, leading to stabilization (PubMed:28445460). Ubiquitinated at Lys-435 via 'Lys-63'-linkage by the DCX(AMBRA1) complex, thereby increasing the association between BECN1 and PIK3C3 to promote PIK3C3 activity (By similarity). 'Lys-48'-linked ubiquitination by RNF216 leads to proteasomal degradation and autophagy inhibition (By similarity).</text>
</comment>
<comment type="PTM">
    <text evidence="22">Proteolytically processed by caspases including CASP8 and CASP3; the C-terminal fragments lack autophagy-inducing capacity and are proposed to induce apoptosis. Thus the cleavage is proposed to be an determinant to switch from autophagy to apoptosis pathways affecting cellular homeostasis including viral infections and survival of tumor cells.</text>
</comment>
<comment type="disruption phenotype">
    <text evidence="7 16">Death early in embryogenesis. Embryos show a severely altered autophagic response, whereas their apoptotic response to serum withdrawal or UV light is normal (PubMed:14657337). Accelerated neurodegeneration (conditional knockout in cerebellar Purkinje cells).</text>
</comment>
<comment type="miscellaneous">
    <text evidence="17">Expanded poly-Gln tracts inhibit ATXN3-BECN1 interaction, decrease BECN1 levels and impair starvation-induced autophagy (PubMed:28445460).</text>
</comment>
<comment type="similarity">
    <text evidence="21">Belongs to the beclin family.</text>
</comment>
<protein>
    <recommendedName>
        <fullName>Beclin-1</fullName>
    </recommendedName>
    <alternativeName>
        <fullName>Coiled-coil myosin-like BCL2-interacting protein</fullName>
    </alternativeName>
    <component>
        <recommendedName>
            <fullName evidence="20">Beclin-1-C 35 kDa</fullName>
        </recommendedName>
    </component>
    <component>
        <recommendedName>
            <fullName evidence="20">Beclin-1-C 37 kDa</fullName>
        </recommendedName>
    </component>
</protein>
<proteinExistence type="evidence at protein level"/>